<gene>
    <name type="primary">FREY1</name>
</gene>
<evidence type="ECO:0000250" key="1">
    <source>
        <dbReference type="UniProtKB" id="Q8CF31"/>
    </source>
</evidence>
<evidence type="ECO:0000255" key="2"/>
<evidence type="ECO:0000256" key="3">
    <source>
        <dbReference type="SAM" id="MobiDB-lite"/>
    </source>
</evidence>
<organism>
    <name type="scientific">Bos taurus</name>
    <name type="common">Bovine</name>
    <dbReference type="NCBI Taxonomy" id="9913"/>
    <lineage>
        <taxon>Eukaryota</taxon>
        <taxon>Metazoa</taxon>
        <taxon>Chordata</taxon>
        <taxon>Craniata</taxon>
        <taxon>Vertebrata</taxon>
        <taxon>Euteleostomi</taxon>
        <taxon>Mammalia</taxon>
        <taxon>Eutheria</taxon>
        <taxon>Laurasiatheria</taxon>
        <taxon>Artiodactyla</taxon>
        <taxon>Ruminantia</taxon>
        <taxon>Pecora</taxon>
        <taxon>Bovidae</taxon>
        <taxon>Bovinae</taxon>
        <taxon>Bos</taxon>
    </lineage>
</organism>
<comment type="function">
    <text evidence="1">Key regulator for male fertility expressed transiently in round spermatids where it recruits IZUMO1 at the endoplasmic reticulum (ER) membrane and coordinates the oolemmal binding multimeric complex (IZUMO1 complex) assembly. Upon complete assembly of the IZUMO1 complex, its ER retention is released, facilitating IZUMO1 complex export to the acrosome. Through the interaction with SPPL2C, inhibits its intramembrane protease activity directly accessing the catalytic center of an I-CLiP.</text>
</comment>
<comment type="subunit">
    <text evidence="1">Interacts with SPPL2C (via active sites); the interaction stabilizes FREY1 protein and inhibits SPPL2C proteolytic activity. Interacts with IZUMO1; the interaction retains IZUMO1 at the endoplasmic reticulum membrane and coordinates IZUMO1 complex assembly.</text>
</comment>
<comment type="subcellular location">
    <subcellularLocation>
        <location evidence="1">Endoplasmic reticulum membrane</location>
        <topology evidence="1">Single-pass type II membrane protein</topology>
    </subcellularLocation>
</comment>
<feature type="chain" id="PRO_0000394234" description="Protein Frey">
    <location>
        <begin position="1"/>
        <end position="99"/>
    </location>
</feature>
<feature type="transmembrane region" description="Helical" evidence="2">
    <location>
        <begin position="13"/>
        <end position="29"/>
    </location>
</feature>
<feature type="region of interest" description="Disordered" evidence="3">
    <location>
        <begin position="64"/>
        <end position="90"/>
    </location>
</feature>
<proteinExistence type="inferred from homology"/>
<name>FREY_BOVIN</name>
<protein>
    <recommendedName>
        <fullName>Protein Frey</fullName>
    </recommendedName>
    <alternativeName>
        <fullName>Frey regulator of sperm-oocyte fusion 1</fullName>
        <shortName>FREY1</shortName>
    </alternativeName>
    <alternativeName>
        <fullName>Uncharacterized protein C11orf94 homolog</fullName>
    </alternativeName>
</protein>
<reference key="1">
    <citation type="submission" date="2007-06" db="EMBL/GenBank/DDBJ databases">
        <authorList>
            <consortium name="NIH - Mammalian Gene Collection (MGC) project"/>
        </authorList>
    </citation>
    <scope>NUCLEOTIDE SEQUENCE [LARGE SCALE MRNA]</scope>
    <source>
        <strain>Crossbred X Angus</strain>
        <tissue>Liver</tissue>
    </source>
</reference>
<dbReference type="EMBL" id="BC142373">
    <property type="protein sequence ID" value="AAI42374.1"/>
    <property type="molecule type" value="mRNA"/>
</dbReference>
<dbReference type="RefSeq" id="NP_001092666.1">
    <property type="nucleotide sequence ID" value="NM_001099196.2"/>
</dbReference>
<dbReference type="FunCoup" id="A5PK62">
    <property type="interactions" value="112"/>
</dbReference>
<dbReference type="PaxDb" id="9913-ENSBTAP00000039424"/>
<dbReference type="Ensembl" id="ENSBTAT00000039634.3">
    <property type="protein sequence ID" value="ENSBTAP00000039424.2"/>
    <property type="gene ID" value="ENSBTAG00000027562.3"/>
</dbReference>
<dbReference type="GeneID" id="785668"/>
<dbReference type="KEGG" id="bta:785668"/>
<dbReference type="CTD" id="143678"/>
<dbReference type="VEuPathDB" id="HostDB:ENSBTAG00000027562"/>
<dbReference type="VGNC" id="VGNC:52636">
    <property type="gene designation" value="FREY1"/>
</dbReference>
<dbReference type="eggNOG" id="ENOG502SCAR">
    <property type="taxonomic scope" value="Eukaryota"/>
</dbReference>
<dbReference type="GeneTree" id="ENSGT00390000018235"/>
<dbReference type="HOGENOM" id="CLU_2319619_0_0_1"/>
<dbReference type="InParanoid" id="A5PK62"/>
<dbReference type="OMA" id="IRPKHPW"/>
<dbReference type="OrthoDB" id="9908355at2759"/>
<dbReference type="TreeFam" id="TF339805"/>
<dbReference type="Proteomes" id="UP000009136">
    <property type="component" value="Chromosome 15"/>
</dbReference>
<dbReference type="Bgee" id="ENSBTAG00000027562">
    <property type="expression patterns" value="Expressed in semen and 87 other cell types or tissues"/>
</dbReference>
<dbReference type="GO" id="GO:0005789">
    <property type="term" value="C:endoplasmic reticulum membrane"/>
    <property type="evidence" value="ECO:0000318"/>
    <property type="project" value="GO_Central"/>
</dbReference>
<dbReference type="GO" id="GO:0030674">
    <property type="term" value="F:protein-macromolecule adaptor activity"/>
    <property type="evidence" value="ECO:0007669"/>
    <property type="project" value="Ensembl"/>
</dbReference>
<dbReference type="GO" id="GO:0007342">
    <property type="term" value="P:fusion of sperm to egg plasma membrane involved in single fertilization"/>
    <property type="evidence" value="ECO:0000318"/>
    <property type="project" value="GO_Central"/>
</dbReference>
<dbReference type="GO" id="GO:0010467">
    <property type="term" value="P:gene expression"/>
    <property type="evidence" value="ECO:0007669"/>
    <property type="project" value="Ensembl"/>
</dbReference>
<dbReference type="GO" id="GO:0035437">
    <property type="term" value="P:maintenance of protein localization in endoplasmic reticulum"/>
    <property type="evidence" value="ECO:0007669"/>
    <property type="project" value="Ensembl"/>
</dbReference>
<dbReference type="GO" id="GO:0006487">
    <property type="term" value="P:protein N-linked glycosylation"/>
    <property type="evidence" value="ECO:0007669"/>
    <property type="project" value="Ensembl"/>
</dbReference>
<dbReference type="GO" id="GO:0050821">
    <property type="term" value="P:protein stabilization"/>
    <property type="evidence" value="ECO:0007669"/>
    <property type="project" value="Ensembl"/>
</dbReference>
<dbReference type="GO" id="GO:0016567">
    <property type="term" value="P:protein ubiquitination"/>
    <property type="evidence" value="ECO:0007669"/>
    <property type="project" value="Ensembl"/>
</dbReference>
<dbReference type="GO" id="GO:0065003">
    <property type="term" value="P:protein-containing complex assembly"/>
    <property type="evidence" value="ECO:0007669"/>
    <property type="project" value="Ensembl"/>
</dbReference>
<dbReference type="GO" id="GO:0035036">
    <property type="term" value="P:sperm-egg recognition"/>
    <property type="evidence" value="ECO:0000318"/>
    <property type="project" value="GO_Central"/>
</dbReference>
<dbReference type="GO" id="GO:0007286">
    <property type="term" value="P:spermatid development"/>
    <property type="evidence" value="ECO:0007669"/>
    <property type="project" value="Ensembl"/>
</dbReference>
<dbReference type="InterPro" id="IPR031748">
    <property type="entry name" value="Frey"/>
</dbReference>
<dbReference type="PANTHER" id="PTHR37872:SF1">
    <property type="entry name" value="PROTEIN FREY 1"/>
    <property type="match status" value="1"/>
</dbReference>
<dbReference type="PANTHER" id="PTHR37872">
    <property type="entry name" value="SIMILAR TO RIKEN CDNA 1700029I15"/>
    <property type="match status" value="1"/>
</dbReference>
<dbReference type="Pfam" id="PF15878">
    <property type="entry name" value="Frey"/>
    <property type="match status" value="1"/>
</dbReference>
<accession>A5PK62</accession>
<keyword id="KW-0256">Endoplasmic reticulum</keyword>
<keyword id="KW-0472">Membrane</keyword>
<keyword id="KW-1185">Reference proteome</keyword>
<keyword id="KW-0812">Transmembrane</keyword>
<keyword id="KW-1133">Transmembrane helix</keyword>
<sequence>MVLAMLGALHPRAGLSLFALYLVLAAALLRPQPLRPQRAVPEEFSAPLELSAPLSGLVDDYGVRPKHPWPRGPRPLLSRAQQRKRDGPDMAEYYYDSRL</sequence>